<comment type="function">
    <text evidence="1">DNA ligase that seals nicks in double-stranded DNA during DNA replication, DNA recombination and DNA repair.</text>
</comment>
<comment type="catalytic activity">
    <reaction evidence="1">
        <text>ATP + (deoxyribonucleotide)n-3'-hydroxyl + 5'-phospho-(deoxyribonucleotide)m = (deoxyribonucleotide)n+m + AMP + diphosphate.</text>
        <dbReference type="EC" id="6.5.1.1"/>
    </reaction>
</comment>
<comment type="cofactor">
    <cofactor evidence="1">
        <name>Mg(2+)</name>
        <dbReference type="ChEBI" id="CHEBI:18420"/>
    </cofactor>
</comment>
<comment type="similarity">
    <text evidence="1">Belongs to the ATP-dependent DNA ligase family.</text>
</comment>
<evidence type="ECO:0000255" key="1">
    <source>
        <dbReference type="HAMAP-Rule" id="MF_00407"/>
    </source>
</evidence>
<evidence type="ECO:0000256" key="2">
    <source>
        <dbReference type="SAM" id="MobiDB-lite"/>
    </source>
</evidence>
<gene>
    <name evidence="1" type="primary">lig</name>
    <name type="ordered locus">M1627_2023</name>
</gene>
<name>DNLI_SACI3</name>
<accession>C3MZR1</accession>
<feature type="chain" id="PRO_1000205955" description="DNA ligase">
    <location>
        <begin position="1"/>
        <end position="601"/>
    </location>
</feature>
<feature type="region of interest" description="Disordered" evidence="2">
    <location>
        <begin position="568"/>
        <end position="601"/>
    </location>
</feature>
<feature type="active site" description="N6-AMP-lysine intermediate" evidence="1">
    <location>
        <position position="260"/>
    </location>
</feature>
<feature type="binding site" evidence="1">
    <location>
        <position position="258"/>
    </location>
    <ligand>
        <name>ATP</name>
        <dbReference type="ChEBI" id="CHEBI:30616"/>
    </ligand>
</feature>
<feature type="binding site" evidence="1">
    <location>
        <position position="265"/>
    </location>
    <ligand>
        <name>ATP</name>
        <dbReference type="ChEBI" id="CHEBI:30616"/>
    </ligand>
</feature>
<feature type="binding site" evidence="1">
    <location>
        <position position="280"/>
    </location>
    <ligand>
        <name>ATP</name>
        <dbReference type="ChEBI" id="CHEBI:30616"/>
    </ligand>
</feature>
<feature type="binding site" evidence="1">
    <location>
        <position position="310"/>
    </location>
    <ligand>
        <name>ATP</name>
        <dbReference type="ChEBI" id="CHEBI:30616"/>
    </ligand>
</feature>
<feature type="binding site" evidence="1">
    <location>
        <position position="350"/>
    </location>
    <ligand>
        <name>ATP</name>
        <dbReference type="ChEBI" id="CHEBI:30616"/>
    </ligand>
</feature>
<feature type="binding site" evidence="1">
    <location>
        <position position="427"/>
    </location>
    <ligand>
        <name>ATP</name>
        <dbReference type="ChEBI" id="CHEBI:30616"/>
    </ligand>
</feature>
<feature type="binding site" evidence="1">
    <location>
        <position position="433"/>
    </location>
    <ligand>
        <name>ATP</name>
        <dbReference type="ChEBI" id="CHEBI:30616"/>
    </ligand>
</feature>
<keyword id="KW-0067">ATP-binding</keyword>
<keyword id="KW-0131">Cell cycle</keyword>
<keyword id="KW-0132">Cell division</keyword>
<keyword id="KW-0227">DNA damage</keyword>
<keyword id="KW-0233">DNA recombination</keyword>
<keyword id="KW-0234">DNA repair</keyword>
<keyword id="KW-0235">DNA replication</keyword>
<keyword id="KW-0436">Ligase</keyword>
<keyword id="KW-0460">Magnesium</keyword>
<keyword id="KW-0479">Metal-binding</keyword>
<keyword id="KW-0547">Nucleotide-binding</keyword>
<organism>
    <name type="scientific">Saccharolobus islandicus (strain M.16.27)</name>
    <name type="common">Sulfolobus islandicus</name>
    <dbReference type="NCBI Taxonomy" id="427318"/>
    <lineage>
        <taxon>Archaea</taxon>
        <taxon>Thermoproteota</taxon>
        <taxon>Thermoprotei</taxon>
        <taxon>Sulfolobales</taxon>
        <taxon>Sulfolobaceae</taxon>
        <taxon>Saccharolobus</taxon>
    </lineage>
</organism>
<proteinExistence type="inferred from homology"/>
<protein>
    <recommendedName>
        <fullName evidence="1">DNA ligase</fullName>
        <ecNumber evidence="1">6.5.1.1</ecNumber>
    </recommendedName>
    <alternativeName>
        <fullName evidence="1">Polydeoxyribonucleotide synthase [ATP]</fullName>
    </alternativeName>
</protein>
<sequence length="601" mass="67716">MEFKVIAEYFDKLEKISSRLQLTALLADLLSKSDKAIIDKVVYIIQGKLWPDFLGYPELGIGEKFLIKAISIATNTDENSVENLYKSIGDLGEVARRLKSKQQSTGILGFLGTSSKESLKVDEVYSTLSKVALTTGEGSRDLKIRLLAGLLKKADPLEAKFLVRFVEGRLRVGIGDATVLDAMAIAFGGGQSASEIVERAYNLRADLGNIAKIIVEKGIEALKTLKPEVGIPIRPMLAERLSNPEEILKKVGGSALVDYKYDGERAQIHKKDDKIFIFSRRLENITSQYPDVVEYISKYTEGKEFIIEGEIVAVDPESGEMRSFQELMHRKRKSDIYEAIKEYPVNVFLFDLMYYEDVDYTTKPLEVRRKLLESIVKPNDYVKIAHHIQVNNVEDLKSFFYRAISEGGEGVMVKAIGKDAIYQAGARGWLWIKLKRDYQSEMADTVDLVVVGGFYGKGKRGGKISSLLMAAYNPKTDTFESVCKVASGFSDEQLDELQKKLMEIKRDIKHPRVNSKMEPDIWVEPVYVAEIIGAEITISPLHTCCQDVVEKDAGLSIRFPRFIRWRDDKSPEDATTTDEILEMYNKQPKKKIESPPIDESV</sequence>
<dbReference type="EC" id="6.5.1.1" evidence="1"/>
<dbReference type="EMBL" id="CP001401">
    <property type="protein sequence ID" value="ACP55893.1"/>
    <property type="molecule type" value="Genomic_DNA"/>
</dbReference>
<dbReference type="RefSeq" id="WP_012711916.1">
    <property type="nucleotide sequence ID" value="NC_012632.1"/>
</dbReference>
<dbReference type="SMR" id="C3MZR1"/>
<dbReference type="KEGG" id="sim:M1627_2023"/>
<dbReference type="HOGENOM" id="CLU_005138_6_0_2"/>
<dbReference type="Proteomes" id="UP000002307">
    <property type="component" value="Chromosome"/>
</dbReference>
<dbReference type="GO" id="GO:0005524">
    <property type="term" value="F:ATP binding"/>
    <property type="evidence" value="ECO:0007669"/>
    <property type="project" value="UniProtKB-UniRule"/>
</dbReference>
<dbReference type="GO" id="GO:0003677">
    <property type="term" value="F:DNA binding"/>
    <property type="evidence" value="ECO:0007669"/>
    <property type="project" value="InterPro"/>
</dbReference>
<dbReference type="GO" id="GO:0003910">
    <property type="term" value="F:DNA ligase (ATP) activity"/>
    <property type="evidence" value="ECO:0007669"/>
    <property type="project" value="UniProtKB-UniRule"/>
</dbReference>
<dbReference type="GO" id="GO:0046872">
    <property type="term" value="F:metal ion binding"/>
    <property type="evidence" value="ECO:0007669"/>
    <property type="project" value="UniProtKB-KW"/>
</dbReference>
<dbReference type="GO" id="GO:0051301">
    <property type="term" value="P:cell division"/>
    <property type="evidence" value="ECO:0007669"/>
    <property type="project" value="UniProtKB-KW"/>
</dbReference>
<dbReference type="GO" id="GO:0071897">
    <property type="term" value="P:DNA biosynthetic process"/>
    <property type="evidence" value="ECO:0007669"/>
    <property type="project" value="InterPro"/>
</dbReference>
<dbReference type="GO" id="GO:0006310">
    <property type="term" value="P:DNA recombination"/>
    <property type="evidence" value="ECO:0007669"/>
    <property type="project" value="UniProtKB-UniRule"/>
</dbReference>
<dbReference type="GO" id="GO:0006281">
    <property type="term" value="P:DNA repair"/>
    <property type="evidence" value="ECO:0007669"/>
    <property type="project" value="UniProtKB-UniRule"/>
</dbReference>
<dbReference type="GO" id="GO:0006273">
    <property type="term" value="P:lagging strand elongation"/>
    <property type="evidence" value="ECO:0007669"/>
    <property type="project" value="TreeGrafter"/>
</dbReference>
<dbReference type="CDD" id="cd07901">
    <property type="entry name" value="Adenylation_DNA_ligase_Arch_LigB"/>
    <property type="match status" value="1"/>
</dbReference>
<dbReference type="CDD" id="cd07969">
    <property type="entry name" value="OBF_DNA_ligase_I"/>
    <property type="match status" value="1"/>
</dbReference>
<dbReference type="FunFam" id="1.10.3260.10:FF:000007">
    <property type="entry name" value="DNA ligase"/>
    <property type="match status" value="1"/>
</dbReference>
<dbReference type="FunFam" id="2.40.50.140:FF:000062">
    <property type="entry name" value="DNA ligase"/>
    <property type="match status" value="1"/>
</dbReference>
<dbReference type="FunFam" id="3.30.470.30:FF:000012">
    <property type="entry name" value="Probable DNA ligase"/>
    <property type="match status" value="1"/>
</dbReference>
<dbReference type="Gene3D" id="1.10.3260.10">
    <property type="entry name" value="DNA ligase, ATP-dependent, N-terminal domain"/>
    <property type="match status" value="1"/>
</dbReference>
<dbReference type="Gene3D" id="3.30.470.30">
    <property type="entry name" value="DNA ligase/mRNA capping enzyme"/>
    <property type="match status" value="1"/>
</dbReference>
<dbReference type="Gene3D" id="2.40.50.140">
    <property type="entry name" value="Nucleic acid-binding proteins"/>
    <property type="match status" value="1"/>
</dbReference>
<dbReference type="HAMAP" id="MF_00407">
    <property type="entry name" value="DNA_ligase"/>
    <property type="match status" value="1"/>
</dbReference>
<dbReference type="InterPro" id="IPR050191">
    <property type="entry name" value="ATP-dep_DNA_ligase"/>
</dbReference>
<dbReference type="InterPro" id="IPR022865">
    <property type="entry name" value="DNA_ligae_ATP-dep_bac/arc"/>
</dbReference>
<dbReference type="InterPro" id="IPR000977">
    <property type="entry name" value="DNA_ligase_ATP-dep"/>
</dbReference>
<dbReference type="InterPro" id="IPR012309">
    <property type="entry name" value="DNA_ligase_ATP-dep_C"/>
</dbReference>
<dbReference type="InterPro" id="IPR012310">
    <property type="entry name" value="DNA_ligase_ATP-dep_cent"/>
</dbReference>
<dbReference type="InterPro" id="IPR016059">
    <property type="entry name" value="DNA_ligase_ATP-dep_CS"/>
</dbReference>
<dbReference type="InterPro" id="IPR012308">
    <property type="entry name" value="DNA_ligase_ATP-dep_N"/>
</dbReference>
<dbReference type="InterPro" id="IPR036599">
    <property type="entry name" value="DNA_ligase_N_sf"/>
</dbReference>
<dbReference type="InterPro" id="IPR012340">
    <property type="entry name" value="NA-bd_OB-fold"/>
</dbReference>
<dbReference type="NCBIfam" id="TIGR00574">
    <property type="entry name" value="dnl1"/>
    <property type="match status" value="1"/>
</dbReference>
<dbReference type="PANTHER" id="PTHR45674:SF4">
    <property type="entry name" value="DNA LIGASE 1"/>
    <property type="match status" value="1"/>
</dbReference>
<dbReference type="PANTHER" id="PTHR45674">
    <property type="entry name" value="DNA LIGASE 1/3 FAMILY MEMBER"/>
    <property type="match status" value="1"/>
</dbReference>
<dbReference type="Pfam" id="PF04679">
    <property type="entry name" value="DNA_ligase_A_C"/>
    <property type="match status" value="1"/>
</dbReference>
<dbReference type="Pfam" id="PF01068">
    <property type="entry name" value="DNA_ligase_A_M"/>
    <property type="match status" value="1"/>
</dbReference>
<dbReference type="Pfam" id="PF04675">
    <property type="entry name" value="DNA_ligase_A_N"/>
    <property type="match status" value="1"/>
</dbReference>
<dbReference type="SUPFAM" id="SSF117018">
    <property type="entry name" value="ATP-dependent DNA ligase DNA-binding domain"/>
    <property type="match status" value="1"/>
</dbReference>
<dbReference type="SUPFAM" id="SSF56091">
    <property type="entry name" value="DNA ligase/mRNA capping enzyme, catalytic domain"/>
    <property type="match status" value="1"/>
</dbReference>
<dbReference type="SUPFAM" id="SSF50249">
    <property type="entry name" value="Nucleic acid-binding proteins"/>
    <property type="match status" value="1"/>
</dbReference>
<dbReference type="PROSITE" id="PS00697">
    <property type="entry name" value="DNA_LIGASE_A1"/>
    <property type="match status" value="1"/>
</dbReference>
<dbReference type="PROSITE" id="PS00333">
    <property type="entry name" value="DNA_LIGASE_A2"/>
    <property type="match status" value="1"/>
</dbReference>
<dbReference type="PROSITE" id="PS50160">
    <property type="entry name" value="DNA_LIGASE_A3"/>
    <property type="match status" value="1"/>
</dbReference>
<reference key="1">
    <citation type="journal article" date="2009" name="Proc. Natl. Acad. Sci. U.S.A.">
        <title>Biogeography of the Sulfolobus islandicus pan-genome.</title>
        <authorList>
            <person name="Reno M.L."/>
            <person name="Held N.L."/>
            <person name="Fields C.J."/>
            <person name="Burke P.V."/>
            <person name="Whitaker R.J."/>
        </authorList>
    </citation>
    <scope>NUCLEOTIDE SEQUENCE [LARGE SCALE GENOMIC DNA]</scope>
    <source>
        <strain>M.16.27</strain>
    </source>
</reference>